<feature type="chain" id="PRO_0000100279" description="Cold shock protein">
    <location>
        <begin position="1"/>
        <end position="67"/>
    </location>
</feature>
<feature type="domain" description="CSD">
    <location>
        <begin position="4"/>
        <end position="64"/>
    </location>
</feature>
<proteinExistence type="evidence at transcript level"/>
<gene>
    <name type="primary">csp</name>
</gene>
<protein>
    <recommendedName>
        <fullName>Cold shock protein</fullName>
    </recommendedName>
</protein>
<keyword id="KW-0010">Activator</keyword>
<keyword id="KW-0963">Cytoplasm</keyword>
<keyword id="KW-0238">DNA-binding</keyword>
<keyword id="KW-0346">Stress response</keyword>
<keyword id="KW-0804">Transcription</keyword>
<keyword id="KW-0805">Transcription regulation</keyword>
<organism>
    <name type="scientific">Arthrobacter globiformis</name>
    <dbReference type="NCBI Taxonomy" id="1665"/>
    <lineage>
        <taxon>Bacteria</taxon>
        <taxon>Bacillati</taxon>
        <taxon>Actinomycetota</taxon>
        <taxon>Actinomycetes</taxon>
        <taxon>Micrococcales</taxon>
        <taxon>Micrococcaceae</taxon>
        <taxon>Arthrobacter</taxon>
    </lineage>
</organism>
<reference key="1">
    <citation type="journal article" date="1996" name="J. Bacteriol.">
        <title>Cold shock and cold acclimation proteins in the psychrotrophic bacterium Arthrobacter globiformis SI55.</title>
        <authorList>
            <person name="Berger F."/>
            <person name="Morellet N."/>
            <person name="Menu F."/>
            <person name="Potier P."/>
        </authorList>
    </citation>
    <scope>NUCLEOTIDE SEQUENCE [GENOMIC DNA]</scope>
    <source>
        <strain>SI55</strain>
    </source>
</reference>
<accession>P54584</accession>
<sequence length="67" mass="7210">MAQGTVKWFNAEKGFGFITPDDSDGDVFVHYSEIQTGGFKTLDENARVQFEIGQGAKGPQATGVTLV</sequence>
<comment type="subcellular location">
    <subcellularLocation>
        <location>Cytoplasm</location>
    </subcellularLocation>
</comment>
<comment type="induction">
    <text>In response to low temperature.</text>
</comment>
<dbReference type="EMBL" id="L41167">
    <property type="protein sequence ID" value="AAB81323.1"/>
    <property type="molecule type" value="Genomic_DNA"/>
</dbReference>
<dbReference type="SMR" id="P54584"/>
<dbReference type="GO" id="GO:0005737">
    <property type="term" value="C:cytoplasm"/>
    <property type="evidence" value="ECO:0007669"/>
    <property type="project" value="UniProtKB-SubCell"/>
</dbReference>
<dbReference type="GO" id="GO:0003677">
    <property type="term" value="F:DNA binding"/>
    <property type="evidence" value="ECO:0007669"/>
    <property type="project" value="UniProtKB-KW"/>
</dbReference>
<dbReference type="CDD" id="cd04458">
    <property type="entry name" value="CSP_CDS"/>
    <property type="match status" value="1"/>
</dbReference>
<dbReference type="FunFam" id="2.40.50.140:FF:000006">
    <property type="entry name" value="Cold shock protein CspC"/>
    <property type="match status" value="1"/>
</dbReference>
<dbReference type="Gene3D" id="2.40.50.140">
    <property type="entry name" value="Nucleic acid-binding proteins"/>
    <property type="match status" value="1"/>
</dbReference>
<dbReference type="InterPro" id="IPR012156">
    <property type="entry name" value="Cold_shock_CspA"/>
</dbReference>
<dbReference type="InterPro" id="IPR050181">
    <property type="entry name" value="Cold_shock_domain"/>
</dbReference>
<dbReference type="InterPro" id="IPR011129">
    <property type="entry name" value="CSD"/>
</dbReference>
<dbReference type="InterPro" id="IPR019844">
    <property type="entry name" value="CSD_CS"/>
</dbReference>
<dbReference type="InterPro" id="IPR002059">
    <property type="entry name" value="CSP_DNA-bd"/>
</dbReference>
<dbReference type="InterPro" id="IPR012340">
    <property type="entry name" value="NA-bd_OB-fold"/>
</dbReference>
<dbReference type="PANTHER" id="PTHR11544">
    <property type="entry name" value="COLD SHOCK DOMAIN CONTAINING PROTEINS"/>
    <property type="match status" value="1"/>
</dbReference>
<dbReference type="Pfam" id="PF00313">
    <property type="entry name" value="CSD"/>
    <property type="match status" value="1"/>
</dbReference>
<dbReference type="PIRSF" id="PIRSF002599">
    <property type="entry name" value="Cold_shock_A"/>
    <property type="match status" value="1"/>
</dbReference>
<dbReference type="PRINTS" id="PR00050">
    <property type="entry name" value="COLDSHOCK"/>
</dbReference>
<dbReference type="SMART" id="SM00357">
    <property type="entry name" value="CSP"/>
    <property type="match status" value="1"/>
</dbReference>
<dbReference type="SUPFAM" id="SSF50249">
    <property type="entry name" value="Nucleic acid-binding proteins"/>
    <property type="match status" value="1"/>
</dbReference>
<dbReference type="PROSITE" id="PS00352">
    <property type="entry name" value="CSD_1"/>
    <property type="match status" value="1"/>
</dbReference>
<dbReference type="PROSITE" id="PS51857">
    <property type="entry name" value="CSD_2"/>
    <property type="match status" value="1"/>
</dbReference>
<name>CSP_ARTGO</name>